<dbReference type="EMBL" id="AE005674">
    <property type="protein sequence ID" value="AAN43536.1"/>
    <property type="molecule type" value="Genomic_DNA"/>
</dbReference>
<dbReference type="EMBL" id="AE014073">
    <property type="protein sequence ID" value="AAP17363.1"/>
    <property type="molecule type" value="Genomic_DNA"/>
</dbReference>
<dbReference type="RefSeq" id="NP_707829.1">
    <property type="nucleotide sequence ID" value="NC_004337.2"/>
</dbReference>
<dbReference type="RefSeq" id="WP_000133106.1">
    <property type="nucleotide sequence ID" value="NZ_WPGW01000059.1"/>
</dbReference>
<dbReference type="SMR" id="P0ABY1"/>
<dbReference type="STRING" id="198214.SF1989"/>
<dbReference type="PaxDb" id="198214-SF1989"/>
<dbReference type="GeneID" id="1025197"/>
<dbReference type="GeneID" id="75172063"/>
<dbReference type="KEGG" id="sfl:SF1989"/>
<dbReference type="KEGG" id="sfx:S2083"/>
<dbReference type="PATRIC" id="fig|198214.7.peg.2377"/>
<dbReference type="HOGENOM" id="CLU_099018_0_1_6"/>
<dbReference type="Proteomes" id="UP000001006">
    <property type="component" value="Chromosome"/>
</dbReference>
<dbReference type="Proteomes" id="UP000002673">
    <property type="component" value="Chromosome"/>
</dbReference>
<dbReference type="GO" id="GO:0009425">
    <property type="term" value="C:bacterial-type flagellum basal body"/>
    <property type="evidence" value="ECO:0007669"/>
    <property type="project" value="InterPro"/>
</dbReference>
<dbReference type="GO" id="GO:0005886">
    <property type="term" value="C:plasma membrane"/>
    <property type="evidence" value="ECO:0007669"/>
    <property type="project" value="UniProtKB-SubCell"/>
</dbReference>
<dbReference type="GO" id="GO:0071978">
    <property type="term" value="P:bacterial-type flagellum-dependent swarming motility"/>
    <property type="evidence" value="ECO:0007669"/>
    <property type="project" value="TreeGrafter"/>
</dbReference>
<dbReference type="GO" id="GO:0006935">
    <property type="term" value="P:chemotaxis"/>
    <property type="evidence" value="ECO:0007669"/>
    <property type="project" value="UniProtKB-KW"/>
</dbReference>
<dbReference type="InterPro" id="IPR005503">
    <property type="entry name" value="FliL"/>
</dbReference>
<dbReference type="NCBIfam" id="NF005435">
    <property type="entry name" value="PRK07021.1"/>
    <property type="match status" value="1"/>
</dbReference>
<dbReference type="PANTHER" id="PTHR35091">
    <property type="entry name" value="FLAGELLAR PROTEIN FLIL"/>
    <property type="match status" value="1"/>
</dbReference>
<dbReference type="PANTHER" id="PTHR35091:SF2">
    <property type="entry name" value="FLAGELLAR PROTEIN FLIL"/>
    <property type="match status" value="1"/>
</dbReference>
<dbReference type="Pfam" id="PF03748">
    <property type="entry name" value="FliL"/>
    <property type="match status" value="1"/>
</dbReference>
<comment type="function">
    <text evidence="1">Controls the rotational direction of flagella during chemotaxis.</text>
</comment>
<comment type="subcellular location">
    <subcellularLocation>
        <location evidence="3">Cell inner membrane</location>
        <topology evidence="3">Single-pass membrane protein</topology>
    </subcellularLocation>
</comment>
<comment type="similarity">
    <text evidence="3">Belongs to the FliL family.</text>
</comment>
<sequence>MTDYAISKKSKRSLWIPILVFITLAACASAGYSYWHSHQVAADDKAQQRVVPSPVFYALDTFTVNLGDADRVLYIGITLRLKDEATRSRLSEYLPEVRSRLLLLFSRQDAAVLATEEGKKNLIAEIKTTLSTPLVAGQPKQDVTDVLYTAFILR</sequence>
<gene>
    <name type="primary">fliL</name>
    <name type="ordered locus">SF1989</name>
    <name type="ordered locus">S2083</name>
</gene>
<keyword id="KW-0997">Cell inner membrane</keyword>
<keyword id="KW-1003">Cell membrane</keyword>
<keyword id="KW-0145">Chemotaxis</keyword>
<keyword id="KW-0283">Flagellar rotation</keyword>
<keyword id="KW-0472">Membrane</keyword>
<keyword id="KW-1185">Reference proteome</keyword>
<keyword id="KW-0812">Transmembrane</keyword>
<keyword id="KW-1133">Transmembrane helix</keyword>
<proteinExistence type="inferred from homology"/>
<evidence type="ECO:0000250" key="1"/>
<evidence type="ECO:0000255" key="2"/>
<evidence type="ECO:0000305" key="3"/>
<feature type="chain" id="PRO_0000180918" description="Flagellar protein FliL">
    <location>
        <begin position="1"/>
        <end position="154"/>
    </location>
</feature>
<feature type="transmembrane region" description="Helical" evidence="2">
    <location>
        <begin position="13"/>
        <end position="35"/>
    </location>
</feature>
<organism>
    <name type="scientific">Shigella flexneri</name>
    <dbReference type="NCBI Taxonomy" id="623"/>
    <lineage>
        <taxon>Bacteria</taxon>
        <taxon>Pseudomonadati</taxon>
        <taxon>Pseudomonadota</taxon>
        <taxon>Gammaproteobacteria</taxon>
        <taxon>Enterobacterales</taxon>
        <taxon>Enterobacteriaceae</taxon>
        <taxon>Shigella</taxon>
    </lineage>
</organism>
<protein>
    <recommendedName>
        <fullName>Flagellar protein FliL</fullName>
    </recommendedName>
</protein>
<reference key="1">
    <citation type="journal article" date="2002" name="Nucleic Acids Res.">
        <title>Genome sequence of Shigella flexneri 2a: insights into pathogenicity through comparison with genomes of Escherichia coli K12 and O157.</title>
        <authorList>
            <person name="Jin Q."/>
            <person name="Yuan Z."/>
            <person name="Xu J."/>
            <person name="Wang Y."/>
            <person name="Shen Y."/>
            <person name="Lu W."/>
            <person name="Wang J."/>
            <person name="Liu H."/>
            <person name="Yang J."/>
            <person name="Yang F."/>
            <person name="Zhang X."/>
            <person name="Zhang J."/>
            <person name="Yang G."/>
            <person name="Wu H."/>
            <person name="Qu D."/>
            <person name="Dong J."/>
            <person name="Sun L."/>
            <person name="Xue Y."/>
            <person name="Zhao A."/>
            <person name="Gao Y."/>
            <person name="Zhu J."/>
            <person name="Kan B."/>
            <person name="Ding K."/>
            <person name="Chen S."/>
            <person name="Cheng H."/>
            <person name="Yao Z."/>
            <person name="He B."/>
            <person name="Chen R."/>
            <person name="Ma D."/>
            <person name="Qiang B."/>
            <person name="Wen Y."/>
            <person name="Hou Y."/>
            <person name="Yu J."/>
        </authorList>
    </citation>
    <scope>NUCLEOTIDE SEQUENCE [LARGE SCALE GENOMIC DNA]</scope>
    <source>
        <strain>301 / Serotype 2a</strain>
    </source>
</reference>
<reference key="2">
    <citation type="journal article" date="2003" name="Infect. Immun.">
        <title>Complete genome sequence and comparative genomics of Shigella flexneri serotype 2a strain 2457T.</title>
        <authorList>
            <person name="Wei J."/>
            <person name="Goldberg M.B."/>
            <person name="Burland V."/>
            <person name="Venkatesan M.M."/>
            <person name="Deng W."/>
            <person name="Fournier G."/>
            <person name="Mayhew G.F."/>
            <person name="Plunkett G. III"/>
            <person name="Rose D.J."/>
            <person name="Darling A."/>
            <person name="Mau B."/>
            <person name="Perna N.T."/>
            <person name="Payne S.M."/>
            <person name="Runyen-Janecky L.J."/>
            <person name="Zhou S."/>
            <person name="Schwartz D.C."/>
            <person name="Blattner F.R."/>
        </authorList>
    </citation>
    <scope>NUCLEOTIDE SEQUENCE [LARGE SCALE GENOMIC DNA]</scope>
    <source>
        <strain>ATCC 700930 / 2457T / Serotype 2a</strain>
    </source>
</reference>
<accession>P0ABY1</accession>
<accession>P06973</accession>
<name>FLIL_SHIFL</name>